<reference key="1">
    <citation type="submission" date="2006-11" db="EMBL/GenBank/DDBJ databases">
        <title>Sequence of Campylobacter fetus subsp. fetus 82-40.</title>
        <authorList>
            <person name="Fouts D.E."/>
            <person name="Nelson K.E."/>
        </authorList>
    </citation>
    <scope>NUCLEOTIDE SEQUENCE [LARGE SCALE GENOMIC DNA]</scope>
    <source>
        <strain>82-40</strain>
    </source>
</reference>
<evidence type="ECO:0000255" key="1">
    <source>
        <dbReference type="HAMAP-Rule" id="MF_00378"/>
    </source>
</evidence>
<organism>
    <name type="scientific">Campylobacter fetus subsp. fetus (strain 82-40)</name>
    <dbReference type="NCBI Taxonomy" id="360106"/>
    <lineage>
        <taxon>Bacteria</taxon>
        <taxon>Pseudomonadati</taxon>
        <taxon>Campylobacterota</taxon>
        <taxon>Epsilonproteobacteria</taxon>
        <taxon>Campylobacterales</taxon>
        <taxon>Campylobacteraceae</taxon>
        <taxon>Campylobacter</taxon>
    </lineage>
</organism>
<accession>A0RMM6</accession>
<dbReference type="EC" id="3.1.11.6" evidence="1"/>
<dbReference type="EMBL" id="CP000487">
    <property type="protein sequence ID" value="ABK82191.1"/>
    <property type="molecule type" value="Genomic_DNA"/>
</dbReference>
<dbReference type="RefSeq" id="WP_011731750.1">
    <property type="nucleotide sequence ID" value="NC_008599.1"/>
</dbReference>
<dbReference type="SMR" id="A0RMM6"/>
<dbReference type="GeneID" id="61064099"/>
<dbReference type="KEGG" id="cff:CFF8240_0255"/>
<dbReference type="eggNOG" id="COG1570">
    <property type="taxonomic scope" value="Bacteria"/>
</dbReference>
<dbReference type="HOGENOM" id="CLU_023625_2_0_7"/>
<dbReference type="Proteomes" id="UP000000760">
    <property type="component" value="Chromosome"/>
</dbReference>
<dbReference type="GO" id="GO:0005737">
    <property type="term" value="C:cytoplasm"/>
    <property type="evidence" value="ECO:0007669"/>
    <property type="project" value="UniProtKB-SubCell"/>
</dbReference>
<dbReference type="GO" id="GO:0009318">
    <property type="term" value="C:exodeoxyribonuclease VII complex"/>
    <property type="evidence" value="ECO:0007669"/>
    <property type="project" value="InterPro"/>
</dbReference>
<dbReference type="GO" id="GO:0008855">
    <property type="term" value="F:exodeoxyribonuclease VII activity"/>
    <property type="evidence" value="ECO:0007669"/>
    <property type="project" value="UniProtKB-UniRule"/>
</dbReference>
<dbReference type="GO" id="GO:0003676">
    <property type="term" value="F:nucleic acid binding"/>
    <property type="evidence" value="ECO:0007669"/>
    <property type="project" value="InterPro"/>
</dbReference>
<dbReference type="GO" id="GO:0006308">
    <property type="term" value="P:DNA catabolic process"/>
    <property type="evidence" value="ECO:0007669"/>
    <property type="project" value="UniProtKB-UniRule"/>
</dbReference>
<dbReference type="CDD" id="cd04489">
    <property type="entry name" value="ExoVII_LU_OBF"/>
    <property type="match status" value="1"/>
</dbReference>
<dbReference type="HAMAP" id="MF_00378">
    <property type="entry name" value="Exonuc_7_L"/>
    <property type="match status" value="1"/>
</dbReference>
<dbReference type="InterPro" id="IPR003753">
    <property type="entry name" value="Exonuc_VII_L"/>
</dbReference>
<dbReference type="InterPro" id="IPR020579">
    <property type="entry name" value="Exonuc_VII_lsu_C"/>
</dbReference>
<dbReference type="InterPro" id="IPR025824">
    <property type="entry name" value="OB-fold_nuc-bd_dom"/>
</dbReference>
<dbReference type="NCBIfam" id="TIGR00237">
    <property type="entry name" value="xseA"/>
    <property type="match status" value="1"/>
</dbReference>
<dbReference type="PANTHER" id="PTHR30008">
    <property type="entry name" value="EXODEOXYRIBONUCLEASE 7 LARGE SUBUNIT"/>
    <property type="match status" value="1"/>
</dbReference>
<dbReference type="PANTHER" id="PTHR30008:SF0">
    <property type="entry name" value="EXODEOXYRIBONUCLEASE 7 LARGE SUBUNIT"/>
    <property type="match status" value="1"/>
</dbReference>
<dbReference type="Pfam" id="PF02601">
    <property type="entry name" value="Exonuc_VII_L"/>
    <property type="match status" value="1"/>
</dbReference>
<dbReference type="Pfam" id="PF13742">
    <property type="entry name" value="tRNA_anti_2"/>
    <property type="match status" value="1"/>
</dbReference>
<comment type="function">
    <text evidence="1">Bidirectionally degrades single-stranded DNA into large acid-insoluble oligonucleotides, which are then degraded further into small acid-soluble oligonucleotides.</text>
</comment>
<comment type="catalytic activity">
    <reaction evidence="1">
        <text>Exonucleolytic cleavage in either 5'- to 3'- or 3'- to 5'-direction to yield nucleoside 5'-phosphates.</text>
        <dbReference type="EC" id="3.1.11.6"/>
    </reaction>
</comment>
<comment type="subunit">
    <text evidence="1">Heterooligomer composed of large and small subunits.</text>
</comment>
<comment type="subcellular location">
    <subcellularLocation>
        <location evidence="1">Cytoplasm</location>
    </subcellularLocation>
</comment>
<comment type="similarity">
    <text evidence="1">Belongs to the XseA family.</text>
</comment>
<keyword id="KW-0963">Cytoplasm</keyword>
<keyword id="KW-0269">Exonuclease</keyword>
<keyword id="KW-0378">Hydrolase</keyword>
<keyword id="KW-0540">Nuclease</keyword>
<name>EX7L_CAMFF</name>
<protein>
    <recommendedName>
        <fullName evidence="1">Exodeoxyribonuclease 7 large subunit</fullName>
        <ecNumber evidence="1">3.1.11.6</ecNumber>
    </recommendedName>
    <alternativeName>
        <fullName evidence="1">Exodeoxyribonuclease VII large subunit</fullName>
        <shortName evidence="1">Exonuclease VII large subunit</shortName>
    </alternativeName>
</protein>
<proteinExistence type="inferred from homology"/>
<feature type="chain" id="PRO_0000303778" description="Exodeoxyribonuclease 7 large subunit">
    <location>
        <begin position="1"/>
        <end position="387"/>
    </location>
</feature>
<sequence length="387" mass="43715">MTVSELNEQAKALLETHFSFVEVTGEISRLIRHSSGHWYFSLKDEKSVISSAMYKFSNQQVKFEVKDGMQVTIYGKLTIYPPSGSYQLLANKMLPVGIGELELAFNQLKSKLENEGLFDIKFKKPLPKFPKKIAIVTSLTSAAYQDMLKVINSRYKLCEFIAFNTLVQGEMAAANIIQMLQKADKMGFDAIVLARGGGSKEDLWCFNDENLARVIFTLKTPIVSAVGHEIDYCISDFVSDHRSLTPTAAMVDLLPDANTILQSLDIAFDKFESFIDGKFQNSFNILNLINQSLKNQAISQKIEKANLTLENKKANLENLITSKINNLAHKIKEFELVFDRQEQFFKATKNMVQIEKNGKIMPLHELQIGDEISIYSQITKKNAIIKS</sequence>
<gene>
    <name evidence="1" type="primary">xseA</name>
    <name type="ordered locus">CFF8240_0255</name>
</gene>